<comment type="function">
    <text evidence="1">Regulates arginine biosynthesis genes.</text>
</comment>
<comment type="pathway">
    <text>Amino-acid biosynthesis; L-arginine biosynthesis [regulation].</text>
</comment>
<comment type="subcellular location">
    <subcellularLocation>
        <location evidence="1">Cytoplasm</location>
    </subcellularLocation>
</comment>
<comment type="similarity">
    <text evidence="1">Belongs to the ArgR family.</text>
</comment>
<name>ARGR_CLOBA</name>
<dbReference type="EMBL" id="CP001078">
    <property type="protein sequence ID" value="ACD53956.1"/>
    <property type="molecule type" value="Genomic_DNA"/>
</dbReference>
<dbReference type="RefSeq" id="WP_003370284.1">
    <property type="nucleotide sequence ID" value="NC_010723.1"/>
</dbReference>
<dbReference type="SMR" id="B2V4R0"/>
<dbReference type="KEGG" id="cbt:CLH_2163"/>
<dbReference type="HOGENOM" id="CLU_097103_3_0_9"/>
<dbReference type="UniPathway" id="UPA00068"/>
<dbReference type="GO" id="GO:0005737">
    <property type="term" value="C:cytoplasm"/>
    <property type="evidence" value="ECO:0007669"/>
    <property type="project" value="UniProtKB-SubCell"/>
</dbReference>
<dbReference type="GO" id="GO:0034618">
    <property type="term" value="F:arginine binding"/>
    <property type="evidence" value="ECO:0007669"/>
    <property type="project" value="InterPro"/>
</dbReference>
<dbReference type="GO" id="GO:0003677">
    <property type="term" value="F:DNA binding"/>
    <property type="evidence" value="ECO:0007669"/>
    <property type="project" value="UniProtKB-KW"/>
</dbReference>
<dbReference type="GO" id="GO:0003700">
    <property type="term" value="F:DNA-binding transcription factor activity"/>
    <property type="evidence" value="ECO:0007669"/>
    <property type="project" value="UniProtKB-UniRule"/>
</dbReference>
<dbReference type="GO" id="GO:0006526">
    <property type="term" value="P:L-arginine biosynthetic process"/>
    <property type="evidence" value="ECO:0007669"/>
    <property type="project" value="UniProtKB-UniPathway"/>
</dbReference>
<dbReference type="GO" id="GO:0051259">
    <property type="term" value="P:protein complex oligomerization"/>
    <property type="evidence" value="ECO:0007669"/>
    <property type="project" value="InterPro"/>
</dbReference>
<dbReference type="GO" id="GO:1900079">
    <property type="term" value="P:regulation of arginine biosynthetic process"/>
    <property type="evidence" value="ECO:0007669"/>
    <property type="project" value="UniProtKB-UniRule"/>
</dbReference>
<dbReference type="Gene3D" id="3.30.1360.40">
    <property type="match status" value="1"/>
</dbReference>
<dbReference type="Gene3D" id="1.10.10.10">
    <property type="entry name" value="Winged helix-like DNA-binding domain superfamily/Winged helix DNA-binding domain"/>
    <property type="match status" value="1"/>
</dbReference>
<dbReference type="HAMAP" id="MF_00173">
    <property type="entry name" value="Arg_repressor"/>
    <property type="match status" value="1"/>
</dbReference>
<dbReference type="InterPro" id="IPR001669">
    <property type="entry name" value="Arg_repress"/>
</dbReference>
<dbReference type="InterPro" id="IPR020899">
    <property type="entry name" value="Arg_repress_C"/>
</dbReference>
<dbReference type="InterPro" id="IPR036251">
    <property type="entry name" value="Arg_repress_C_sf"/>
</dbReference>
<dbReference type="InterPro" id="IPR020900">
    <property type="entry name" value="Arg_repress_DNA-bd"/>
</dbReference>
<dbReference type="InterPro" id="IPR036388">
    <property type="entry name" value="WH-like_DNA-bd_sf"/>
</dbReference>
<dbReference type="InterPro" id="IPR036390">
    <property type="entry name" value="WH_DNA-bd_sf"/>
</dbReference>
<dbReference type="NCBIfam" id="TIGR01529">
    <property type="entry name" value="argR_whole"/>
    <property type="match status" value="1"/>
</dbReference>
<dbReference type="NCBIfam" id="NF001680">
    <property type="entry name" value="PRK00441.1"/>
    <property type="match status" value="1"/>
</dbReference>
<dbReference type="PANTHER" id="PTHR34471">
    <property type="entry name" value="ARGININE REPRESSOR"/>
    <property type="match status" value="1"/>
</dbReference>
<dbReference type="PANTHER" id="PTHR34471:SF1">
    <property type="entry name" value="ARGININE REPRESSOR"/>
    <property type="match status" value="1"/>
</dbReference>
<dbReference type="Pfam" id="PF01316">
    <property type="entry name" value="Arg_repressor"/>
    <property type="match status" value="1"/>
</dbReference>
<dbReference type="Pfam" id="PF02863">
    <property type="entry name" value="Arg_repressor_C"/>
    <property type="match status" value="1"/>
</dbReference>
<dbReference type="PRINTS" id="PR01467">
    <property type="entry name" value="ARGREPRESSOR"/>
</dbReference>
<dbReference type="SUPFAM" id="SSF55252">
    <property type="entry name" value="C-terminal domain of arginine repressor"/>
    <property type="match status" value="1"/>
</dbReference>
<dbReference type="SUPFAM" id="SSF46785">
    <property type="entry name" value="Winged helix' DNA-binding domain"/>
    <property type="match status" value="1"/>
</dbReference>
<reference key="1">
    <citation type="submission" date="2008-05" db="EMBL/GenBank/DDBJ databases">
        <title>Complete genome sequence of Clostridium botulinum E3 str. Alaska E43.</title>
        <authorList>
            <person name="Brinkac L.M."/>
            <person name="Brown J.L."/>
            <person name="Bruce D."/>
            <person name="Detter C."/>
            <person name="Munk C."/>
            <person name="Smith L.A."/>
            <person name="Smith T.J."/>
            <person name="Sutton G."/>
            <person name="Brettin T.S."/>
        </authorList>
    </citation>
    <scope>NUCLEOTIDE SEQUENCE [LARGE SCALE GENOMIC DNA]</scope>
    <source>
        <strain>Alaska E43 / Type E3</strain>
    </source>
</reference>
<protein>
    <recommendedName>
        <fullName evidence="1">Arginine repressor</fullName>
    </recommendedName>
</protein>
<evidence type="ECO:0000255" key="1">
    <source>
        <dbReference type="HAMAP-Rule" id="MF_00173"/>
    </source>
</evidence>
<keyword id="KW-0028">Amino-acid biosynthesis</keyword>
<keyword id="KW-0055">Arginine biosynthesis</keyword>
<keyword id="KW-0963">Cytoplasm</keyword>
<keyword id="KW-0238">DNA-binding</keyword>
<keyword id="KW-0678">Repressor</keyword>
<keyword id="KW-0804">Transcription</keyword>
<keyword id="KW-0805">Transcription regulation</keyword>
<feature type="chain" id="PRO_1000097863" description="Arginine repressor">
    <location>
        <begin position="1"/>
        <end position="150"/>
    </location>
</feature>
<accession>B2V4R0</accession>
<sequence>MKSKRHTKILEIISSKEIETQEDLAEELKLQGFDVTQATVSRDIKNLKLIKIQGASGNYKYVVSSGEEKNIIDRLSNILSNTVISAENVDKMVVIKTLSGSGSAAAEAIDNLEGADVAGTVAGDNTIFILLRSLEKAEELVAKIRKRISI</sequence>
<organism>
    <name type="scientific">Clostridium botulinum (strain Alaska E43 / Type E3)</name>
    <dbReference type="NCBI Taxonomy" id="508767"/>
    <lineage>
        <taxon>Bacteria</taxon>
        <taxon>Bacillati</taxon>
        <taxon>Bacillota</taxon>
        <taxon>Clostridia</taxon>
        <taxon>Eubacteriales</taxon>
        <taxon>Clostridiaceae</taxon>
        <taxon>Clostridium</taxon>
    </lineage>
</organism>
<proteinExistence type="inferred from homology"/>
<gene>
    <name evidence="1" type="primary">argR</name>
    <name type="ordered locus">CLH_2163</name>
</gene>